<sequence>MNNLTLSLHRERRLLVLLGLVCLALLAGALYLQYVKNEDPCPLCIIQRYFFVLIAVFAFIGAGMASGAGIAVIEALIVLSAAAGVGTAARHLYVQLNPGFSCGFDALQPVVDSLPPAHWLPGVFKVAGLCETVYPPIFGILLPGWALIAFALIVVPVAASLLRHRGRLR</sequence>
<feature type="chain" id="PRO_0000298350" description="Disulfide bond formation protein B">
    <location>
        <begin position="1"/>
        <end position="169"/>
    </location>
</feature>
<feature type="topological domain" description="Cytoplasmic" evidence="1">
    <location>
        <begin position="1"/>
        <end position="14"/>
    </location>
</feature>
<feature type="transmembrane region" description="Helical" evidence="1">
    <location>
        <begin position="15"/>
        <end position="31"/>
    </location>
</feature>
<feature type="topological domain" description="Periplasmic" evidence="1">
    <location>
        <begin position="32"/>
        <end position="49"/>
    </location>
</feature>
<feature type="transmembrane region" description="Helical" evidence="1">
    <location>
        <begin position="50"/>
        <end position="64"/>
    </location>
</feature>
<feature type="topological domain" description="Cytoplasmic" evidence="1">
    <location>
        <begin position="65"/>
        <end position="71"/>
    </location>
</feature>
<feature type="transmembrane region" description="Helical" evidence="1">
    <location>
        <begin position="72"/>
        <end position="89"/>
    </location>
</feature>
<feature type="topological domain" description="Periplasmic" evidence="1">
    <location>
        <begin position="90"/>
        <end position="144"/>
    </location>
</feature>
<feature type="transmembrane region" description="Helical" evidence="1">
    <location>
        <begin position="145"/>
        <end position="163"/>
    </location>
</feature>
<feature type="topological domain" description="Cytoplasmic" evidence="1">
    <location>
        <begin position="164"/>
        <end position="169"/>
    </location>
</feature>
<feature type="disulfide bond" description="Redox-active" evidence="1">
    <location>
        <begin position="41"/>
        <end position="44"/>
    </location>
</feature>
<feature type="disulfide bond" description="Redox-active" evidence="1">
    <location>
        <begin position="102"/>
        <end position="130"/>
    </location>
</feature>
<keyword id="KW-0997">Cell inner membrane</keyword>
<keyword id="KW-1003">Cell membrane</keyword>
<keyword id="KW-0143">Chaperone</keyword>
<keyword id="KW-1015">Disulfide bond</keyword>
<keyword id="KW-0249">Electron transport</keyword>
<keyword id="KW-0472">Membrane</keyword>
<keyword id="KW-0560">Oxidoreductase</keyword>
<keyword id="KW-0676">Redox-active center</keyword>
<keyword id="KW-0812">Transmembrane</keyword>
<keyword id="KW-1133">Transmembrane helix</keyword>
<keyword id="KW-0813">Transport</keyword>
<proteinExistence type="inferred from homology"/>
<dbReference type="EMBL" id="CP000086">
    <property type="protein sequence ID" value="ABC38158.1"/>
    <property type="molecule type" value="Genomic_DNA"/>
</dbReference>
<dbReference type="RefSeq" id="WP_009889807.1">
    <property type="nucleotide sequence ID" value="NZ_CP008785.1"/>
</dbReference>
<dbReference type="SMR" id="Q2SY47"/>
<dbReference type="GeneID" id="45121348"/>
<dbReference type="KEGG" id="bte:BTH_I1614"/>
<dbReference type="HOGENOM" id="CLU_098660_1_0_4"/>
<dbReference type="Proteomes" id="UP000001930">
    <property type="component" value="Chromosome I"/>
</dbReference>
<dbReference type="GO" id="GO:0005886">
    <property type="term" value="C:plasma membrane"/>
    <property type="evidence" value="ECO:0007669"/>
    <property type="project" value="UniProtKB-SubCell"/>
</dbReference>
<dbReference type="GO" id="GO:0009055">
    <property type="term" value="F:electron transfer activity"/>
    <property type="evidence" value="ECO:0007669"/>
    <property type="project" value="UniProtKB-UniRule"/>
</dbReference>
<dbReference type="GO" id="GO:0015035">
    <property type="term" value="F:protein-disulfide reductase activity"/>
    <property type="evidence" value="ECO:0007669"/>
    <property type="project" value="UniProtKB-UniRule"/>
</dbReference>
<dbReference type="GO" id="GO:0006457">
    <property type="term" value="P:protein folding"/>
    <property type="evidence" value="ECO:0007669"/>
    <property type="project" value="InterPro"/>
</dbReference>
<dbReference type="Gene3D" id="1.20.1550.10">
    <property type="entry name" value="DsbB-like"/>
    <property type="match status" value="1"/>
</dbReference>
<dbReference type="HAMAP" id="MF_00286">
    <property type="entry name" value="DsbB"/>
    <property type="match status" value="1"/>
</dbReference>
<dbReference type="InterPro" id="IPR003752">
    <property type="entry name" value="DiS_bond_form_DsbB/BdbC"/>
</dbReference>
<dbReference type="InterPro" id="IPR022920">
    <property type="entry name" value="Disulphide_bond_form_DsbB"/>
</dbReference>
<dbReference type="InterPro" id="IPR050183">
    <property type="entry name" value="DsbB"/>
</dbReference>
<dbReference type="InterPro" id="IPR023380">
    <property type="entry name" value="DsbB-like_sf"/>
</dbReference>
<dbReference type="NCBIfam" id="NF002552">
    <property type="entry name" value="PRK02110.1"/>
    <property type="match status" value="1"/>
</dbReference>
<dbReference type="PANTHER" id="PTHR36570">
    <property type="entry name" value="DISULFIDE BOND FORMATION PROTEIN B"/>
    <property type="match status" value="1"/>
</dbReference>
<dbReference type="PANTHER" id="PTHR36570:SF3">
    <property type="entry name" value="DISULFIDE BOND FORMATION PROTEIN B"/>
    <property type="match status" value="1"/>
</dbReference>
<dbReference type="Pfam" id="PF02600">
    <property type="entry name" value="DsbB"/>
    <property type="match status" value="1"/>
</dbReference>
<dbReference type="SUPFAM" id="SSF158442">
    <property type="entry name" value="DsbB-like"/>
    <property type="match status" value="1"/>
</dbReference>
<name>DSBB_BURTA</name>
<reference key="1">
    <citation type="journal article" date="2005" name="BMC Genomics">
        <title>Bacterial genome adaptation to niches: divergence of the potential virulence genes in three Burkholderia species of different survival strategies.</title>
        <authorList>
            <person name="Kim H.S."/>
            <person name="Schell M.A."/>
            <person name="Yu Y."/>
            <person name="Ulrich R.L."/>
            <person name="Sarria S.H."/>
            <person name="Nierman W.C."/>
            <person name="DeShazer D."/>
        </authorList>
    </citation>
    <scope>NUCLEOTIDE SEQUENCE [LARGE SCALE GENOMIC DNA]</scope>
    <source>
        <strain>ATCC 700388 / DSM 13276 / CCUG 48851 / CIP 106301 / E264</strain>
    </source>
</reference>
<organism>
    <name type="scientific">Burkholderia thailandensis (strain ATCC 700388 / DSM 13276 / CCUG 48851 / CIP 106301 / E264)</name>
    <dbReference type="NCBI Taxonomy" id="271848"/>
    <lineage>
        <taxon>Bacteria</taxon>
        <taxon>Pseudomonadati</taxon>
        <taxon>Pseudomonadota</taxon>
        <taxon>Betaproteobacteria</taxon>
        <taxon>Burkholderiales</taxon>
        <taxon>Burkholderiaceae</taxon>
        <taxon>Burkholderia</taxon>
        <taxon>pseudomallei group</taxon>
    </lineage>
</organism>
<accession>Q2SY47</accession>
<gene>
    <name evidence="1" type="primary">dsbB</name>
    <name type="ordered locus">BTH_I1614</name>
</gene>
<comment type="function">
    <text evidence="1">Required for disulfide bond formation in some periplasmic proteins. Acts by oxidizing the DsbA protein.</text>
</comment>
<comment type="subcellular location">
    <subcellularLocation>
        <location evidence="1">Cell inner membrane</location>
        <topology evidence="1">Multi-pass membrane protein</topology>
    </subcellularLocation>
</comment>
<comment type="similarity">
    <text evidence="1">Belongs to the DsbB family.</text>
</comment>
<evidence type="ECO:0000255" key="1">
    <source>
        <dbReference type="HAMAP-Rule" id="MF_00286"/>
    </source>
</evidence>
<protein>
    <recommendedName>
        <fullName evidence="1">Disulfide bond formation protein B</fullName>
    </recommendedName>
    <alternativeName>
        <fullName evidence="1">Disulfide oxidoreductase</fullName>
    </alternativeName>
</protein>